<comment type="function">
    <text evidence="1">Produces ATP from ADP in the presence of a proton gradient across the membrane. The catalytic sites are hosted primarily by the beta subunits.</text>
</comment>
<comment type="catalytic activity">
    <reaction evidence="1">
        <text>ATP + H2O + 4 H(+)(in) = ADP + phosphate + 5 H(+)(out)</text>
        <dbReference type="Rhea" id="RHEA:57720"/>
        <dbReference type="ChEBI" id="CHEBI:15377"/>
        <dbReference type="ChEBI" id="CHEBI:15378"/>
        <dbReference type="ChEBI" id="CHEBI:30616"/>
        <dbReference type="ChEBI" id="CHEBI:43474"/>
        <dbReference type="ChEBI" id="CHEBI:456216"/>
        <dbReference type="EC" id="7.1.2.2"/>
    </reaction>
</comment>
<comment type="subunit">
    <text evidence="1">F-type ATPases have 2 components, CF(1) - the catalytic core - and CF(0) - the membrane proton channel. CF(1) has five subunits: alpha(3), beta(3), gamma(1), delta(1), epsilon(1). CF(0) has three main subunits: a(1), b(2) and c(9-12). The alpha and beta chains form an alternating ring which encloses part of the gamma chain. CF(1) is attached to CF(0) by a central stalk formed by the gamma and epsilon chains, while a peripheral stalk is formed by the delta and b chains.</text>
</comment>
<comment type="subcellular location">
    <subcellularLocation>
        <location evidence="1">Cell inner membrane</location>
        <topology evidence="1">Peripheral membrane protein</topology>
    </subcellularLocation>
</comment>
<comment type="similarity">
    <text evidence="1">Belongs to the ATPase alpha/beta chains family.</text>
</comment>
<name>ATPB_BRUC2</name>
<keyword id="KW-0066">ATP synthesis</keyword>
<keyword id="KW-0067">ATP-binding</keyword>
<keyword id="KW-0997">Cell inner membrane</keyword>
<keyword id="KW-1003">Cell membrane</keyword>
<keyword id="KW-0139">CF(1)</keyword>
<keyword id="KW-0375">Hydrogen ion transport</keyword>
<keyword id="KW-0406">Ion transport</keyword>
<keyword id="KW-0472">Membrane</keyword>
<keyword id="KW-0547">Nucleotide-binding</keyword>
<keyword id="KW-1185">Reference proteome</keyword>
<keyword id="KW-1278">Translocase</keyword>
<keyword id="KW-0813">Transport</keyword>
<reference key="1">
    <citation type="submission" date="2007-10" db="EMBL/GenBank/DDBJ databases">
        <title>Brucella canis ATCC 23365 whole genome shotgun sequencing project.</title>
        <authorList>
            <person name="Setubal J.C."/>
            <person name="Bowns C."/>
            <person name="Boyle S."/>
            <person name="Crasta O.R."/>
            <person name="Czar M.J."/>
            <person name="Dharmanolla C."/>
            <person name="Gillespie J.J."/>
            <person name="Kenyon R.W."/>
            <person name="Lu J."/>
            <person name="Mane S."/>
            <person name="Mohapatra S."/>
            <person name="Nagrani S."/>
            <person name="Purkayastha A."/>
            <person name="Rajasimha H.K."/>
            <person name="Shallom J.M."/>
            <person name="Shallom S."/>
            <person name="Shukla M."/>
            <person name="Snyder E.E."/>
            <person name="Sobral B.W."/>
            <person name="Wattam A.R."/>
            <person name="Will R."/>
            <person name="Williams K."/>
            <person name="Yoo H."/>
            <person name="Bruce D."/>
            <person name="Detter C."/>
            <person name="Munk C."/>
            <person name="Brettin T.S."/>
        </authorList>
    </citation>
    <scope>NUCLEOTIDE SEQUENCE [LARGE SCALE GENOMIC DNA]</scope>
    <source>
        <strain>ATCC 23365 / NCTC 10854 / RM-666</strain>
    </source>
</reference>
<feature type="chain" id="PRO_0000339483" description="ATP synthase subunit beta">
    <location>
        <begin position="1"/>
        <end position="521"/>
    </location>
</feature>
<feature type="region of interest" description="Disordered" evidence="2">
    <location>
        <begin position="1"/>
        <end position="42"/>
    </location>
</feature>
<feature type="compositionally biased region" description="Low complexity" evidence="2">
    <location>
        <begin position="1"/>
        <end position="21"/>
    </location>
</feature>
<feature type="compositionally biased region" description="Low complexity" evidence="2">
    <location>
        <begin position="28"/>
        <end position="42"/>
    </location>
</feature>
<feature type="binding site" evidence="1">
    <location>
        <begin position="199"/>
        <end position="206"/>
    </location>
    <ligand>
        <name>ATP</name>
        <dbReference type="ChEBI" id="CHEBI:30616"/>
    </ligand>
</feature>
<accession>A9M837</accession>
<gene>
    <name evidence="1" type="primary">atpD</name>
    <name type="ordered locus">BCAN_A1837</name>
</gene>
<sequence>MAKAATPKTTAAAEAKPAAKAPAKKAAPKTTAAAKPAATKSGAPKAAAAGAIGHITQVIGAVVDVKFPEGQLPLILNALEVDNQGHRLVLEVAQHLGEDTVRTIAMDATEGLVRGQEARDTGEPIMVPVGVETLGRIMNVIGEPVDEAGPIKTKATRAIHQNAPEYIEQSTEAEILVTGIKVVDLLAPYAKGGKIGLFGGAGVGKTVLIMELINNVAKAHGGYSVFAGVGERTREGNDLYHEMIESGVNKLGGGEGSKAALVYGQMNEPPGARARVALSGLTVAENFRDQGQDVLFFVDNIFRFTQAGSEVSALLGRIPSAVGYQPTLATDMGAMQERITTTTKGSITSVQAIYVPADDLTDPAPATSFAHLDATTVLSRSIAEKGIYPAVDPLDSTSRMLDPKVVGEEHYAVARQVQSILQRYKALQDIIAILGMDELSEEDKLTVARARKIERFLSQPFFVAEVFTGSPGKLVDLADTIKGFKGLCAGDYDHLPEAAFYMVGSIEEALEKAKKLAAEAA</sequence>
<organism>
    <name type="scientific">Brucella canis (strain ATCC 23365 / NCTC 10854 / RM-666)</name>
    <dbReference type="NCBI Taxonomy" id="483179"/>
    <lineage>
        <taxon>Bacteria</taxon>
        <taxon>Pseudomonadati</taxon>
        <taxon>Pseudomonadota</taxon>
        <taxon>Alphaproteobacteria</taxon>
        <taxon>Hyphomicrobiales</taxon>
        <taxon>Brucellaceae</taxon>
        <taxon>Brucella/Ochrobactrum group</taxon>
        <taxon>Brucella</taxon>
    </lineage>
</organism>
<dbReference type="EC" id="7.1.2.2" evidence="1"/>
<dbReference type="EMBL" id="CP000872">
    <property type="protein sequence ID" value="ABX62835.1"/>
    <property type="molecule type" value="Genomic_DNA"/>
</dbReference>
<dbReference type="RefSeq" id="WP_004684261.1">
    <property type="nucleotide sequence ID" value="NC_010103.1"/>
</dbReference>
<dbReference type="SMR" id="A9M837"/>
<dbReference type="GeneID" id="97533076"/>
<dbReference type="KEGG" id="bcs:BCAN_A1837"/>
<dbReference type="HOGENOM" id="CLU_022398_0_2_5"/>
<dbReference type="PhylomeDB" id="A9M837"/>
<dbReference type="Proteomes" id="UP000001385">
    <property type="component" value="Chromosome I"/>
</dbReference>
<dbReference type="GO" id="GO:0005886">
    <property type="term" value="C:plasma membrane"/>
    <property type="evidence" value="ECO:0007669"/>
    <property type="project" value="UniProtKB-SubCell"/>
</dbReference>
<dbReference type="GO" id="GO:0045259">
    <property type="term" value="C:proton-transporting ATP synthase complex"/>
    <property type="evidence" value="ECO:0007669"/>
    <property type="project" value="UniProtKB-KW"/>
</dbReference>
<dbReference type="GO" id="GO:0005524">
    <property type="term" value="F:ATP binding"/>
    <property type="evidence" value="ECO:0007669"/>
    <property type="project" value="UniProtKB-UniRule"/>
</dbReference>
<dbReference type="GO" id="GO:0016887">
    <property type="term" value="F:ATP hydrolysis activity"/>
    <property type="evidence" value="ECO:0007669"/>
    <property type="project" value="InterPro"/>
</dbReference>
<dbReference type="GO" id="GO:0046933">
    <property type="term" value="F:proton-transporting ATP synthase activity, rotational mechanism"/>
    <property type="evidence" value="ECO:0007669"/>
    <property type="project" value="UniProtKB-UniRule"/>
</dbReference>
<dbReference type="CDD" id="cd18110">
    <property type="entry name" value="ATP-synt_F1_beta_C"/>
    <property type="match status" value="1"/>
</dbReference>
<dbReference type="CDD" id="cd18115">
    <property type="entry name" value="ATP-synt_F1_beta_N"/>
    <property type="match status" value="1"/>
</dbReference>
<dbReference type="CDD" id="cd01133">
    <property type="entry name" value="F1-ATPase_beta_CD"/>
    <property type="match status" value="1"/>
</dbReference>
<dbReference type="FunFam" id="1.10.1140.10:FF:000001">
    <property type="entry name" value="ATP synthase subunit beta"/>
    <property type="match status" value="1"/>
</dbReference>
<dbReference type="FunFam" id="2.40.10.170:FF:000005">
    <property type="entry name" value="ATP synthase subunit beta"/>
    <property type="match status" value="1"/>
</dbReference>
<dbReference type="FunFam" id="3.40.50.300:FF:000026">
    <property type="entry name" value="ATP synthase subunit beta"/>
    <property type="match status" value="1"/>
</dbReference>
<dbReference type="Gene3D" id="2.40.10.170">
    <property type="match status" value="1"/>
</dbReference>
<dbReference type="Gene3D" id="1.10.1140.10">
    <property type="entry name" value="Bovine Mitochondrial F1-atpase, Atp Synthase Beta Chain, Chain D, domain 3"/>
    <property type="match status" value="1"/>
</dbReference>
<dbReference type="Gene3D" id="3.40.50.300">
    <property type="entry name" value="P-loop containing nucleotide triphosphate hydrolases"/>
    <property type="match status" value="1"/>
</dbReference>
<dbReference type="HAMAP" id="MF_01347">
    <property type="entry name" value="ATP_synth_beta_bact"/>
    <property type="match status" value="1"/>
</dbReference>
<dbReference type="InterPro" id="IPR003593">
    <property type="entry name" value="AAA+_ATPase"/>
</dbReference>
<dbReference type="InterPro" id="IPR055190">
    <property type="entry name" value="ATP-synt_VA_C"/>
</dbReference>
<dbReference type="InterPro" id="IPR005722">
    <property type="entry name" value="ATP_synth_F1_bsu"/>
</dbReference>
<dbReference type="InterPro" id="IPR020003">
    <property type="entry name" value="ATPase_a/bsu_AS"/>
</dbReference>
<dbReference type="InterPro" id="IPR050053">
    <property type="entry name" value="ATPase_alpha/beta_chains"/>
</dbReference>
<dbReference type="InterPro" id="IPR004100">
    <property type="entry name" value="ATPase_F1/V1/A1_a/bsu_N"/>
</dbReference>
<dbReference type="InterPro" id="IPR036121">
    <property type="entry name" value="ATPase_F1/V1/A1_a/bsu_N_sf"/>
</dbReference>
<dbReference type="InterPro" id="IPR000194">
    <property type="entry name" value="ATPase_F1/V1/A1_a/bsu_nucl-bd"/>
</dbReference>
<dbReference type="InterPro" id="IPR024034">
    <property type="entry name" value="ATPase_F1/V1_b/a_C"/>
</dbReference>
<dbReference type="InterPro" id="IPR027417">
    <property type="entry name" value="P-loop_NTPase"/>
</dbReference>
<dbReference type="NCBIfam" id="TIGR01039">
    <property type="entry name" value="atpD"/>
    <property type="match status" value="1"/>
</dbReference>
<dbReference type="PANTHER" id="PTHR15184">
    <property type="entry name" value="ATP SYNTHASE"/>
    <property type="match status" value="1"/>
</dbReference>
<dbReference type="PANTHER" id="PTHR15184:SF71">
    <property type="entry name" value="ATP SYNTHASE SUBUNIT BETA, MITOCHONDRIAL"/>
    <property type="match status" value="1"/>
</dbReference>
<dbReference type="Pfam" id="PF00006">
    <property type="entry name" value="ATP-synt_ab"/>
    <property type="match status" value="1"/>
</dbReference>
<dbReference type="Pfam" id="PF02874">
    <property type="entry name" value="ATP-synt_ab_N"/>
    <property type="match status" value="1"/>
</dbReference>
<dbReference type="Pfam" id="PF22919">
    <property type="entry name" value="ATP-synt_VA_C"/>
    <property type="match status" value="1"/>
</dbReference>
<dbReference type="PIRSF" id="PIRSF039072">
    <property type="entry name" value="ATPase_subunit_beta"/>
    <property type="match status" value="1"/>
</dbReference>
<dbReference type="SMART" id="SM00382">
    <property type="entry name" value="AAA"/>
    <property type="match status" value="1"/>
</dbReference>
<dbReference type="SUPFAM" id="SSF47917">
    <property type="entry name" value="C-terminal domain of alpha and beta subunits of F1 ATP synthase"/>
    <property type="match status" value="1"/>
</dbReference>
<dbReference type="SUPFAM" id="SSF50615">
    <property type="entry name" value="N-terminal domain of alpha and beta subunits of F1 ATP synthase"/>
    <property type="match status" value="1"/>
</dbReference>
<dbReference type="SUPFAM" id="SSF52540">
    <property type="entry name" value="P-loop containing nucleoside triphosphate hydrolases"/>
    <property type="match status" value="1"/>
</dbReference>
<dbReference type="PROSITE" id="PS00152">
    <property type="entry name" value="ATPASE_ALPHA_BETA"/>
    <property type="match status" value="1"/>
</dbReference>
<protein>
    <recommendedName>
        <fullName evidence="1">ATP synthase subunit beta</fullName>
        <ecNumber evidence="1">7.1.2.2</ecNumber>
    </recommendedName>
    <alternativeName>
        <fullName evidence="1">ATP synthase F1 sector subunit beta</fullName>
    </alternativeName>
    <alternativeName>
        <fullName evidence="1">F-ATPase subunit beta</fullName>
    </alternativeName>
</protein>
<evidence type="ECO:0000255" key="1">
    <source>
        <dbReference type="HAMAP-Rule" id="MF_01347"/>
    </source>
</evidence>
<evidence type="ECO:0000256" key="2">
    <source>
        <dbReference type="SAM" id="MobiDB-lite"/>
    </source>
</evidence>
<proteinExistence type="inferred from homology"/>